<protein>
    <recommendedName>
        <fullName>Autoinducer 2 sensor kinase/phosphatase LuxQ</fullName>
        <ecNumber>2.7.13.3</ecNumber>
        <ecNumber>3.1.3.-</ecNumber>
    </recommendedName>
</protein>
<keyword id="KW-0067">ATP-binding</keyword>
<keyword id="KW-0997">Cell inner membrane</keyword>
<keyword id="KW-1003">Cell membrane</keyword>
<keyword id="KW-0378">Hydrolase</keyword>
<keyword id="KW-0418">Kinase</keyword>
<keyword id="KW-0472">Membrane</keyword>
<keyword id="KW-0547">Nucleotide-binding</keyword>
<keyword id="KW-0597">Phosphoprotein</keyword>
<keyword id="KW-0904">Protein phosphatase</keyword>
<keyword id="KW-0808">Transferase</keyword>
<keyword id="KW-0812">Transmembrane</keyword>
<keyword id="KW-1133">Transmembrane helix</keyword>
<keyword id="KW-0902">Two-component regulatory system</keyword>
<proteinExistence type="inferred from homology"/>
<gene>
    <name type="primary">luxQ</name>
    <name type="ordered locus">VPA1220</name>
</gene>
<organism>
    <name type="scientific">Vibrio parahaemolyticus serotype O3:K6 (strain RIMD 2210633)</name>
    <dbReference type="NCBI Taxonomy" id="223926"/>
    <lineage>
        <taxon>Bacteria</taxon>
        <taxon>Pseudomonadati</taxon>
        <taxon>Pseudomonadota</taxon>
        <taxon>Gammaproteobacteria</taxon>
        <taxon>Vibrionales</taxon>
        <taxon>Vibrionaceae</taxon>
        <taxon>Vibrio</taxon>
    </lineage>
</organism>
<sequence length="858" mass="96790">MTITSKLKKRRSLSTLITKIIILVLAPIILGIFVQSYYFSKQIIWQEVDRTKQQTSALILNIFESHFAAIQIHHDSNSKSDVILDFYSERNEEALNYFFLSIDQSDPSHTPEFRFLTDHQGIIWDDGNAHFYGINDSMLDGLTSKVTFSNNWYYVTSITSMGARHLLLRRVPVLEPKTGEVMGYSYNAVVLDNNFALMEKLKNEGNVDNVVLVANDIPVASSLAGDESYKIFDVLKRKETQKKLDQLLIIQTPIEVNAAITNLKLLTVQDNQSVVTLQIQHFLAMLASVIGMIMIALMTKEWIENRVVEELGSLMSYTRSAREEKGFERFGGSDIEEFDHIGSTLESTFEELEAQKRSFRDLFNFALSPIMVWSEAGVLIQINPAARKELVIENDIETMHPVFKGFKDKLVPHLRMAAQGATLTGVNVPIGDKVFRWNLSPIRVDGDISGIIVQGQDITTLIEAEKQSNLARREAEKSAQARADFLAKMSHEIRTPINGILGVAQLLKDSVEAEEQKNQIDVLRHSGEHLLAVLNDILDFSKIEQGKFNIQKHPFSFADTMRTLENIYRPICENKGVELVIENQLDGNVEIFTDQVRLNQILFNLVSNAVKFTPSGCVRLHAELEQFYGADNSVLVVEISDTGIGIESDKLDEMFEPFVQEEATTTREYGGSGLGLTIVKNLVDMLDGDVQVRSQKGQGTTFVVTLPVKDRERVLAPLDSSQRVKPAELFDESLKVLLVEDNHTNAFILKAFCTKYKMQVDWAKDGLEAMEFLKDHSYDLILMDNQLPHLGGIETTKEIRQNLKLGTPIYACTADTAQETSDAFMEAGANYVLLKPIKENALHEAFVDFKQRFLIERT</sequence>
<feature type="chain" id="PRO_0000074784" description="Autoinducer 2 sensor kinase/phosphatase LuxQ">
    <location>
        <begin position="1"/>
        <end position="858"/>
    </location>
</feature>
<feature type="transmembrane region" description="Helical" evidence="2">
    <location>
        <begin position="14"/>
        <end position="34"/>
    </location>
</feature>
<feature type="transmembrane region" description="Helical" evidence="2">
    <location>
        <begin position="362"/>
        <end position="382"/>
    </location>
</feature>
<feature type="domain" description="Histidine kinase" evidence="3">
    <location>
        <begin position="488"/>
        <end position="710"/>
    </location>
</feature>
<feature type="domain" description="Response regulatory" evidence="4">
    <location>
        <begin position="735"/>
        <end position="850"/>
    </location>
</feature>
<feature type="modified residue" description="Phosphohistidine; by autocatalysis" evidence="3">
    <location>
        <position position="491"/>
    </location>
</feature>
<feature type="modified residue" description="4-aspartylphosphate" evidence="4">
    <location>
        <position position="784"/>
    </location>
</feature>
<reference key="1">
    <citation type="journal article" date="2003" name="Lancet">
        <title>Genome sequence of Vibrio parahaemolyticus: a pathogenic mechanism distinct from that of V. cholerae.</title>
        <authorList>
            <person name="Makino K."/>
            <person name="Oshima K."/>
            <person name="Kurokawa K."/>
            <person name="Yokoyama K."/>
            <person name="Uda T."/>
            <person name="Tagomori K."/>
            <person name="Iijima Y."/>
            <person name="Najima M."/>
            <person name="Nakano M."/>
            <person name="Yamashita A."/>
            <person name="Kubota Y."/>
            <person name="Kimura S."/>
            <person name="Yasunaga T."/>
            <person name="Honda T."/>
            <person name="Shinagawa H."/>
            <person name="Hattori M."/>
            <person name="Iida T."/>
        </authorList>
    </citation>
    <scope>NUCLEOTIDE SEQUENCE [LARGE SCALE GENOMIC DNA]</scope>
    <source>
        <strain>RIMD 2210633</strain>
    </source>
</reference>
<comment type="function">
    <text evidence="1">At low cell density, in absence of autoinducer has a kinase activity, and autophosphorylates on a histidine residue. The phosphoryl group is then transferred to an aspartate residue in the response regulator domain. The phosphoryl group is transferred to LuxU, and ultimately to LuxO. At high cell density, in the presence of autoinducer, the kinase activity is inactivated, and the response regulator domain has a phosphatase activity (By similarity).</text>
</comment>
<comment type="catalytic activity">
    <reaction>
        <text>ATP + protein L-histidine = ADP + protein N-phospho-L-histidine.</text>
        <dbReference type="EC" id="2.7.13.3"/>
    </reaction>
</comment>
<comment type="subunit">
    <text evidence="1">Binds the complex formed by the autoinducer and LuxP.</text>
</comment>
<comment type="subcellular location">
    <subcellularLocation>
        <location evidence="5">Cell inner membrane</location>
        <topology evidence="5">Multi-pass membrane protein</topology>
    </subcellularLocation>
</comment>
<dbReference type="EC" id="2.7.13.3"/>
<dbReference type="EC" id="3.1.3.-"/>
<dbReference type="EMBL" id="BA000032">
    <property type="protein sequence ID" value="BAC62563.1"/>
    <property type="molecule type" value="Genomic_DNA"/>
</dbReference>
<dbReference type="RefSeq" id="NP_800730.1">
    <property type="nucleotide sequence ID" value="NC_004605.1"/>
</dbReference>
<dbReference type="RefSeq" id="WP_005477121.1">
    <property type="nucleotide sequence ID" value="NC_004605.1"/>
</dbReference>
<dbReference type="SMR" id="Q87GU5"/>
<dbReference type="GeneID" id="1191916"/>
<dbReference type="KEGG" id="vpa:VPA1220"/>
<dbReference type="PATRIC" id="fig|223926.6.peg.4148"/>
<dbReference type="eggNOG" id="COG0784">
    <property type="taxonomic scope" value="Bacteria"/>
</dbReference>
<dbReference type="eggNOG" id="COG2205">
    <property type="taxonomic scope" value="Bacteria"/>
</dbReference>
<dbReference type="HOGENOM" id="CLU_000445_74_1_6"/>
<dbReference type="Proteomes" id="UP000002493">
    <property type="component" value="Chromosome 2"/>
</dbReference>
<dbReference type="GO" id="GO:0005886">
    <property type="term" value="C:plasma membrane"/>
    <property type="evidence" value="ECO:0007669"/>
    <property type="project" value="UniProtKB-SubCell"/>
</dbReference>
<dbReference type="GO" id="GO:0005524">
    <property type="term" value="F:ATP binding"/>
    <property type="evidence" value="ECO:0007669"/>
    <property type="project" value="UniProtKB-KW"/>
</dbReference>
<dbReference type="GO" id="GO:0009927">
    <property type="term" value="F:histidine phosphotransfer kinase activity"/>
    <property type="evidence" value="ECO:0007669"/>
    <property type="project" value="TreeGrafter"/>
</dbReference>
<dbReference type="GO" id="GO:0004721">
    <property type="term" value="F:phosphoprotein phosphatase activity"/>
    <property type="evidence" value="ECO:0007669"/>
    <property type="project" value="UniProtKB-KW"/>
</dbReference>
<dbReference type="GO" id="GO:0000155">
    <property type="term" value="F:phosphorelay sensor kinase activity"/>
    <property type="evidence" value="ECO:0007669"/>
    <property type="project" value="InterPro"/>
</dbReference>
<dbReference type="CDD" id="cd16922">
    <property type="entry name" value="HATPase_EvgS-ArcB-TorS-like"/>
    <property type="match status" value="1"/>
</dbReference>
<dbReference type="CDD" id="cd00082">
    <property type="entry name" value="HisKA"/>
    <property type="match status" value="1"/>
</dbReference>
<dbReference type="CDD" id="cd17546">
    <property type="entry name" value="REC_hyHK_CKI1_RcsC-like"/>
    <property type="match status" value="1"/>
</dbReference>
<dbReference type="FunFam" id="1.10.287.130:FF:000091">
    <property type="entry name" value="Autoinducer 2 sensor kinase/phosphatase LuxQ"/>
    <property type="match status" value="1"/>
</dbReference>
<dbReference type="FunFam" id="3.40.50.2300:FF:000322">
    <property type="entry name" value="Autoinducer 2 sensor kinase/phosphatase luxQ"/>
    <property type="match status" value="1"/>
</dbReference>
<dbReference type="FunFam" id="3.30.565.10:FF:000010">
    <property type="entry name" value="Sensor histidine kinase RcsC"/>
    <property type="match status" value="1"/>
</dbReference>
<dbReference type="Gene3D" id="1.10.287.130">
    <property type="match status" value="1"/>
</dbReference>
<dbReference type="Gene3D" id="3.40.50.2300">
    <property type="match status" value="1"/>
</dbReference>
<dbReference type="Gene3D" id="3.30.565.10">
    <property type="entry name" value="Histidine kinase-like ATPase, C-terminal domain"/>
    <property type="match status" value="1"/>
</dbReference>
<dbReference type="Gene3D" id="2.20.20.100">
    <property type="entry name" value="LuxQ periplasmic domain, C-terminal subdomain"/>
    <property type="match status" value="1"/>
</dbReference>
<dbReference type="Gene3D" id="3.30.450.220">
    <property type="entry name" value="LuxQ periplasmic domain, N-terminal subdomain"/>
    <property type="match status" value="1"/>
</dbReference>
<dbReference type="Gene3D" id="3.30.450.20">
    <property type="entry name" value="PAS domain"/>
    <property type="match status" value="1"/>
</dbReference>
<dbReference type="InterPro" id="IPR053413">
    <property type="entry name" value="AI-2_sensor_kinase/phosphatase"/>
</dbReference>
<dbReference type="InterPro" id="IPR011006">
    <property type="entry name" value="CheY-like_superfamily"/>
</dbReference>
<dbReference type="InterPro" id="IPR036890">
    <property type="entry name" value="HATPase_C_sf"/>
</dbReference>
<dbReference type="InterPro" id="IPR005467">
    <property type="entry name" value="His_kinase_dom"/>
</dbReference>
<dbReference type="InterPro" id="IPR003661">
    <property type="entry name" value="HisK_dim/P_dom"/>
</dbReference>
<dbReference type="InterPro" id="IPR036097">
    <property type="entry name" value="HisK_dim/P_sf"/>
</dbReference>
<dbReference type="InterPro" id="IPR015387">
    <property type="entry name" value="LuxQ-periplasm_dom"/>
</dbReference>
<dbReference type="InterPro" id="IPR043056">
    <property type="entry name" value="LuxQ-periplasm_N"/>
</dbReference>
<dbReference type="InterPro" id="IPR035965">
    <property type="entry name" value="PAS-like_dom_sf"/>
</dbReference>
<dbReference type="InterPro" id="IPR029151">
    <property type="entry name" value="Sensor-like_sf"/>
</dbReference>
<dbReference type="InterPro" id="IPR004358">
    <property type="entry name" value="Sig_transdc_His_kin-like_C"/>
</dbReference>
<dbReference type="InterPro" id="IPR001789">
    <property type="entry name" value="Sig_transdc_resp-reg_receiver"/>
</dbReference>
<dbReference type="NCBIfam" id="NF041947">
    <property type="entry name" value="LuxQ_Vibrio"/>
    <property type="match status" value="1"/>
</dbReference>
<dbReference type="PANTHER" id="PTHR43047:SF72">
    <property type="entry name" value="OSMOSENSING HISTIDINE PROTEIN KINASE SLN1"/>
    <property type="match status" value="1"/>
</dbReference>
<dbReference type="PANTHER" id="PTHR43047">
    <property type="entry name" value="TWO-COMPONENT HISTIDINE PROTEIN KINASE"/>
    <property type="match status" value="1"/>
</dbReference>
<dbReference type="Pfam" id="PF02518">
    <property type="entry name" value="HATPase_c"/>
    <property type="match status" value="1"/>
</dbReference>
<dbReference type="Pfam" id="PF00512">
    <property type="entry name" value="HisKA"/>
    <property type="match status" value="1"/>
</dbReference>
<dbReference type="Pfam" id="PF09308">
    <property type="entry name" value="LuxQ-periplasm"/>
    <property type="match status" value="1"/>
</dbReference>
<dbReference type="Pfam" id="PF00072">
    <property type="entry name" value="Response_reg"/>
    <property type="match status" value="1"/>
</dbReference>
<dbReference type="PRINTS" id="PR00344">
    <property type="entry name" value="BCTRLSENSOR"/>
</dbReference>
<dbReference type="SMART" id="SM00387">
    <property type="entry name" value="HATPase_c"/>
    <property type="match status" value="1"/>
</dbReference>
<dbReference type="SMART" id="SM00388">
    <property type="entry name" value="HisKA"/>
    <property type="match status" value="1"/>
</dbReference>
<dbReference type="SMART" id="SM00448">
    <property type="entry name" value="REC"/>
    <property type="match status" value="1"/>
</dbReference>
<dbReference type="SUPFAM" id="SSF55874">
    <property type="entry name" value="ATPase domain of HSP90 chaperone/DNA topoisomerase II/histidine kinase"/>
    <property type="match status" value="1"/>
</dbReference>
<dbReference type="SUPFAM" id="SSF52172">
    <property type="entry name" value="CheY-like"/>
    <property type="match status" value="1"/>
</dbReference>
<dbReference type="SUPFAM" id="SSF47384">
    <property type="entry name" value="Homodimeric domain of signal transducing histidine kinase"/>
    <property type="match status" value="1"/>
</dbReference>
<dbReference type="SUPFAM" id="SSF55785">
    <property type="entry name" value="PYP-like sensor domain (PAS domain)"/>
    <property type="match status" value="1"/>
</dbReference>
<dbReference type="SUPFAM" id="SSF103190">
    <property type="entry name" value="Sensory domain-like"/>
    <property type="match status" value="1"/>
</dbReference>
<dbReference type="PROSITE" id="PS50109">
    <property type="entry name" value="HIS_KIN"/>
    <property type="match status" value="1"/>
</dbReference>
<dbReference type="PROSITE" id="PS50110">
    <property type="entry name" value="RESPONSE_REGULATORY"/>
    <property type="match status" value="1"/>
</dbReference>
<evidence type="ECO:0000250" key="1"/>
<evidence type="ECO:0000255" key="2"/>
<evidence type="ECO:0000255" key="3">
    <source>
        <dbReference type="PROSITE-ProRule" id="PRU00107"/>
    </source>
</evidence>
<evidence type="ECO:0000255" key="4">
    <source>
        <dbReference type="PROSITE-ProRule" id="PRU00169"/>
    </source>
</evidence>
<evidence type="ECO:0000305" key="5"/>
<accession>Q87GU5</accession>
<name>LUXQ_VIBPA</name>